<proteinExistence type="evidence at transcript level"/>
<keyword id="KW-0175">Coiled coil</keyword>
<keyword id="KW-0963">Cytoplasm</keyword>
<keyword id="KW-0539">Nucleus</keyword>
<keyword id="KW-1185">Reference proteome</keyword>
<organism>
    <name type="scientific">Bos taurus</name>
    <name type="common">Bovine</name>
    <dbReference type="NCBI Taxonomy" id="9913"/>
    <lineage>
        <taxon>Eukaryota</taxon>
        <taxon>Metazoa</taxon>
        <taxon>Chordata</taxon>
        <taxon>Craniata</taxon>
        <taxon>Vertebrata</taxon>
        <taxon>Euteleostomi</taxon>
        <taxon>Mammalia</taxon>
        <taxon>Eutheria</taxon>
        <taxon>Laurasiatheria</taxon>
        <taxon>Artiodactyla</taxon>
        <taxon>Ruminantia</taxon>
        <taxon>Pecora</taxon>
        <taxon>Bovidae</taxon>
        <taxon>Bovinae</taxon>
        <taxon>Bos</taxon>
    </lineage>
</organism>
<reference evidence="6" key="1">
    <citation type="submission" date="2005-08" db="EMBL/GenBank/DDBJ databases">
        <authorList>
            <consortium name="NIH - Mammalian Gene Collection (MGC) project"/>
        </authorList>
    </citation>
    <scope>NUCLEOTIDE SEQUENCE [LARGE SCALE MRNA]</scope>
    <source>
        <strain evidence="6">Hereford</strain>
        <tissue evidence="6">Hypothalamus</tissue>
    </source>
</reference>
<evidence type="ECO:0000250" key="1">
    <source>
        <dbReference type="UniProtKB" id="Q5M820"/>
    </source>
</evidence>
<evidence type="ECO:0000250" key="2">
    <source>
        <dbReference type="UniProtKB" id="Q9Y605"/>
    </source>
</evidence>
<evidence type="ECO:0000255" key="3"/>
<evidence type="ECO:0000256" key="4">
    <source>
        <dbReference type="SAM" id="MobiDB-lite"/>
    </source>
</evidence>
<evidence type="ECO:0000305" key="5"/>
<evidence type="ECO:0000312" key="6">
    <source>
        <dbReference type="EMBL" id="AAI02899.1"/>
    </source>
</evidence>
<protein>
    <recommendedName>
        <fullName>MORF4 family-associated protein 1</fullName>
    </recommendedName>
</protein>
<name>MOFA1_BOVIN</name>
<gene>
    <name evidence="6" type="primary">MRFAP1</name>
</gene>
<accession>Q3ZC61</accession>
<sequence length="127" mass="14680">MRPLDIVELAEPEEVEVLEPEEDFEQFLLPVINEMREDIAALSREHGRAYLRNRSKLWEMDNMLIQIKTQVEASEESALNHLQNPDDGAEGRGTKRCEKAEEKAKEIAKMAEMLVELVRRIEKSESS</sequence>
<dbReference type="EMBL" id="BC102898">
    <property type="protein sequence ID" value="AAI02899.1"/>
    <property type="molecule type" value="mRNA"/>
</dbReference>
<dbReference type="SMR" id="Q3ZC61"/>
<dbReference type="FunCoup" id="Q3ZC61">
    <property type="interactions" value="1481"/>
</dbReference>
<dbReference type="STRING" id="9913.ENSBTAP00000056519"/>
<dbReference type="PaxDb" id="9913-ENSBTAP00000056519"/>
<dbReference type="Ensembl" id="ENSBTAT00000065893.3">
    <property type="protein sequence ID" value="ENSBTAP00000056519.1"/>
    <property type="gene ID" value="ENSBTAG00000046936.3"/>
</dbReference>
<dbReference type="Ensembl" id="ENSBTAT00000117012.1">
    <property type="protein sequence ID" value="ENSBTAP00000089203.1"/>
    <property type="gene ID" value="ENSBTAG00000046936.3"/>
</dbReference>
<dbReference type="KEGG" id="bta:522338"/>
<dbReference type="CTD" id="114932"/>
<dbReference type="VEuPathDB" id="HostDB:ENSBTAG00000046936"/>
<dbReference type="eggNOG" id="ENOG502RU25">
    <property type="taxonomic scope" value="Eukaryota"/>
</dbReference>
<dbReference type="GeneTree" id="ENSGT00940000155541"/>
<dbReference type="HOGENOM" id="CLU_166966_1_0_1"/>
<dbReference type="InParanoid" id="Q3ZC61"/>
<dbReference type="OMA" id="RVTKRCE"/>
<dbReference type="OrthoDB" id="9837479at2759"/>
<dbReference type="TreeFam" id="TF338232"/>
<dbReference type="Proteomes" id="UP000009136">
    <property type="component" value="Chromosome 6"/>
</dbReference>
<dbReference type="Bgee" id="ENSBTAG00000046936">
    <property type="expression patterns" value="Expressed in hypothalamus and 101 other cell types or tissues"/>
</dbReference>
<dbReference type="GO" id="GO:0005634">
    <property type="term" value="C:nucleus"/>
    <property type="evidence" value="ECO:0007669"/>
    <property type="project" value="UniProtKB-SubCell"/>
</dbReference>
<dbReference type="GO" id="GO:0048471">
    <property type="term" value="C:perinuclear region of cytoplasm"/>
    <property type="evidence" value="ECO:0007669"/>
    <property type="project" value="UniProtKB-SubCell"/>
</dbReference>
<dbReference type="InterPro" id="IPR029254">
    <property type="entry name" value="MRFAP1"/>
</dbReference>
<dbReference type="PANTHER" id="PTHR31324:SF1">
    <property type="entry name" value="MORF4 FAMILY-ASSOCIATED PROTEIN 1"/>
    <property type="match status" value="1"/>
</dbReference>
<dbReference type="PANTHER" id="PTHR31324">
    <property type="entry name" value="MORF4 FAMILY-ASSOCIATED PROTEIN 1-RELATED"/>
    <property type="match status" value="1"/>
</dbReference>
<dbReference type="Pfam" id="PF15155">
    <property type="entry name" value="MRFAP1"/>
    <property type="match status" value="1"/>
</dbReference>
<feature type="chain" id="PRO_0000306175" description="MORF4 family-associated protein 1">
    <location>
        <begin position="1"/>
        <end position="127"/>
    </location>
</feature>
<feature type="region of interest" description="Disordered" evidence="4">
    <location>
        <begin position="76"/>
        <end position="97"/>
    </location>
</feature>
<feature type="coiled-coil region" evidence="3">
    <location>
        <begin position="92"/>
        <end position="126"/>
    </location>
</feature>
<comment type="subunit">
    <text evidence="1 2">Found in a complex composed of MORF4L1, MRFAP1 and RB1. Interacts via its N-terminus with MORF4L1. Interacts with CSTB and MORF4L2 (By similarity).</text>
</comment>
<comment type="subcellular location">
    <subcellularLocation>
        <location evidence="2">Nucleus</location>
    </subcellularLocation>
    <subcellularLocation>
        <location evidence="2">Cytoplasm</location>
        <location evidence="2">Perinuclear region</location>
    </subcellularLocation>
    <text evidence="2">Colocalizes with MORF4L1 to cell nuclei.</text>
</comment>
<comment type="similarity">
    <text evidence="5">Belongs to the MORF4 family-associated protein family.</text>
</comment>